<name>ASPN_STRM5</name>
<sequence length="417" mass="44067">MLSRSIGKAAGGLVLGLSVAAAAHAAPLFEPVTVLSRAAAGSEPALGKLLATPSTATVQEVRVDAAATAQPQLEFELLGQRVQAVRSKVESLPDGGSIWYGQFRSPSDRLTAATSNGQDDPGNSVILVRSGNTVTGSIRKDGKLYRLRPLGNRHVLVEVDESRMPADHPADYNQLPKIPMGNNDRIGIAQASSGTPATIRVLVVATNAAVAAYGGNMQSLVQLAVAESNQGYVNSNVGITLQLAGYETTSYTESGNFTTDLTRFRNTSDGYMDSIHTSRNNTAADVGVLLINNTSYCGLASGIGSTASTAFAAVYWDCATGYYSFAHEIGHLQSARHDIASDPSTSPYAYGHGYRYEPASGSRWRTIMAYDCSAGCPRLNYWSNPNISYNGVPMGIASSADNQRVLVNTKATIAAFR</sequence>
<accession>B4SLL0</accession>
<dbReference type="EC" id="3.4.24.33"/>
<dbReference type="EMBL" id="CP001111">
    <property type="protein sequence ID" value="ACF50520.1"/>
    <property type="molecule type" value="Genomic_DNA"/>
</dbReference>
<dbReference type="RefSeq" id="WP_012510180.1">
    <property type="nucleotide sequence ID" value="NC_011071.1"/>
</dbReference>
<dbReference type="SMR" id="B4SLL0"/>
<dbReference type="STRING" id="391008.Smal_0815"/>
<dbReference type="KEGG" id="smt:Smal_0815"/>
<dbReference type="eggNOG" id="COG3291">
    <property type="taxonomic scope" value="Bacteria"/>
</dbReference>
<dbReference type="HOGENOM" id="CLU_658751_0_0_6"/>
<dbReference type="OrthoDB" id="3976083at2"/>
<dbReference type="Proteomes" id="UP000001867">
    <property type="component" value="Chromosome"/>
</dbReference>
<dbReference type="GO" id="GO:0046872">
    <property type="term" value="F:metal ion binding"/>
    <property type="evidence" value="ECO:0007669"/>
    <property type="project" value="UniProtKB-KW"/>
</dbReference>
<dbReference type="GO" id="GO:0008237">
    <property type="term" value="F:metallopeptidase activity"/>
    <property type="evidence" value="ECO:0007669"/>
    <property type="project" value="UniProtKB-KW"/>
</dbReference>
<dbReference type="GO" id="GO:0006508">
    <property type="term" value="P:proteolysis"/>
    <property type="evidence" value="ECO:0007669"/>
    <property type="project" value="UniProtKB-KW"/>
</dbReference>
<dbReference type="Gene3D" id="3.40.390.10">
    <property type="entry name" value="Collagenase (Catalytic Domain)"/>
    <property type="match status" value="1"/>
</dbReference>
<dbReference type="InterPro" id="IPR024079">
    <property type="entry name" value="MetalloPept_cat_dom_sf"/>
</dbReference>
<dbReference type="Pfam" id="PF13688">
    <property type="entry name" value="Reprolysin_5"/>
    <property type="match status" value="1"/>
</dbReference>
<dbReference type="SUPFAM" id="SSF55486">
    <property type="entry name" value="Metalloproteases ('zincins'), catalytic domain"/>
    <property type="match status" value="1"/>
</dbReference>
<dbReference type="PROSITE" id="PS00142">
    <property type="entry name" value="ZINC_PROTEASE"/>
    <property type="match status" value="1"/>
</dbReference>
<keyword id="KW-0378">Hydrolase</keyword>
<keyword id="KW-0479">Metal-binding</keyword>
<keyword id="KW-0482">Metalloprotease</keyword>
<keyword id="KW-0645">Protease</keyword>
<keyword id="KW-0732">Signal</keyword>
<keyword id="KW-0862">Zinc</keyword>
<comment type="function">
    <text evidence="2">Metalloprotease, specifically cleaves on the N-terminal side of aspartyl, glutamyl and cysteic acid residues.</text>
</comment>
<comment type="catalytic activity">
    <reaction evidence="2">
        <text>Cleavage of Xaa-|-Asp, Xaa-|-Glu and Xaa-|-cysteic acid bonds.</text>
        <dbReference type="EC" id="3.4.24.33"/>
    </reaction>
</comment>
<comment type="cofactor">
    <cofactor evidence="1">
        <name>Zn(2+)</name>
        <dbReference type="ChEBI" id="CHEBI:29105"/>
    </cofactor>
    <text evidence="1">Binds 1 zinc ion per subunit.</text>
</comment>
<comment type="similarity">
    <text evidence="5">Belongs to the peptidase M72 family.</text>
</comment>
<reference key="1">
    <citation type="submission" date="2008-06" db="EMBL/GenBank/DDBJ databases">
        <title>Complete sequence of Stenotrophomonas maltophilia R551-3.</title>
        <authorList>
            <consortium name="US DOE Joint Genome Institute"/>
            <person name="Lucas S."/>
            <person name="Copeland A."/>
            <person name="Lapidus A."/>
            <person name="Glavina del Rio T."/>
            <person name="Dalin E."/>
            <person name="Tice H."/>
            <person name="Pitluck S."/>
            <person name="Chain P."/>
            <person name="Malfatti S."/>
            <person name="Shin M."/>
            <person name="Vergez L."/>
            <person name="Lang D."/>
            <person name="Schmutz J."/>
            <person name="Larimer F."/>
            <person name="Land M."/>
            <person name="Hauser L."/>
            <person name="Kyrpides N."/>
            <person name="Mikhailova N."/>
            <person name="Taghavi S."/>
            <person name="Monchy S."/>
            <person name="Newman L."/>
            <person name="Vangronsveld J."/>
            <person name="van der Lelie D."/>
            <person name="Richardson P."/>
        </authorList>
    </citation>
    <scope>NUCLEOTIDE SEQUENCE [LARGE SCALE GENOMIC DNA]</scope>
    <source>
        <strain>R551-3</strain>
    </source>
</reference>
<feature type="signal peptide" evidence="3">
    <location>
        <begin position="1"/>
        <end position="25"/>
    </location>
</feature>
<feature type="chain" id="PRO_5000389139" description="Peptidyl-Asp metalloendopeptidase" evidence="3">
    <location>
        <begin position="26"/>
        <end position="417"/>
    </location>
</feature>
<feature type="active site" evidence="1 4">
    <location>
        <position position="328"/>
    </location>
</feature>
<feature type="binding site" evidence="1 4">
    <location>
        <position position="327"/>
    </location>
    <ligand>
        <name>Zn(2+)</name>
        <dbReference type="ChEBI" id="CHEBI:29105"/>
        <note>catalytic</note>
    </ligand>
</feature>
<feature type="binding site" evidence="1 4">
    <location>
        <position position="331"/>
    </location>
    <ligand>
        <name>Zn(2+)</name>
        <dbReference type="ChEBI" id="CHEBI:29105"/>
        <note>catalytic</note>
    </ligand>
</feature>
<feature type="binding site" evidence="1 4">
    <location>
        <position position="337"/>
    </location>
    <ligand>
        <name>Zn(2+)</name>
        <dbReference type="ChEBI" id="CHEBI:29105"/>
        <note>catalytic</note>
    </ligand>
</feature>
<evidence type="ECO:0000250" key="1">
    <source>
        <dbReference type="UniProtKB" id="O75173"/>
    </source>
</evidence>
<evidence type="ECO:0000250" key="2">
    <source>
        <dbReference type="UniProtKB" id="Q9R4J4"/>
    </source>
</evidence>
<evidence type="ECO:0000255" key="3"/>
<evidence type="ECO:0000255" key="4">
    <source>
        <dbReference type="PROSITE-ProRule" id="PRU10095"/>
    </source>
</evidence>
<evidence type="ECO:0000305" key="5"/>
<evidence type="ECO:0000312" key="6">
    <source>
        <dbReference type="EMBL" id="ACF50520.1"/>
    </source>
</evidence>
<proteinExistence type="inferred from homology"/>
<organism>
    <name type="scientific">Stenotrophomonas maltophilia (strain R551-3)</name>
    <dbReference type="NCBI Taxonomy" id="391008"/>
    <lineage>
        <taxon>Bacteria</taxon>
        <taxon>Pseudomonadati</taxon>
        <taxon>Pseudomonadota</taxon>
        <taxon>Gammaproteobacteria</taxon>
        <taxon>Lysobacterales</taxon>
        <taxon>Lysobacteraceae</taxon>
        <taxon>Stenotrophomonas</taxon>
        <taxon>Stenotrophomonas maltophilia group</taxon>
    </lineage>
</organism>
<protein>
    <recommendedName>
        <fullName evidence="6">Peptidyl-Asp metalloendopeptidase</fullName>
        <ecNumber>3.4.24.33</ecNumber>
    </recommendedName>
    <alternativeName>
        <fullName evidence="2">Endopeptidase Asp-N</fullName>
    </alternativeName>
</protein>
<gene>
    <name type="ordered locus">Smal_0815</name>
</gene>